<proteinExistence type="evidence at protein level"/>
<feature type="chain" id="PRO_0000217674" description="Proteinase inhibitor PTI">
    <location>
        <begin position="1"/>
        <end position="51"/>
    </location>
</feature>
<feature type="site" description="Reactive bond for trypsin" evidence="1">
    <location>
        <begin position="38"/>
        <end position="39"/>
    </location>
</feature>
<feature type="disulfide bond" evidence="1">
    <location>
        <begin position="3"/>
        <end position="40"/>
    </location>
</feature>
<feature type="disulfide bond" evidence="1">
    <location>
        <begin position="6"/>
        <end position="24"/>
    </location>
</feature>
<feature type="disulfide bond" evidence="1">
    <location>
        <begin position="7"/>
        <end position="36"/>
    </location>
</feature>
<feature type="disulfide bond" evidence="1">
    <location>
        <begin position="13"/>
        <end position="49"/>
    </location>
</feature>
<sequence length="51" mass="5602">RICTNCCAGYKGCNYYSANGAFICEGESDPKNPNVCPRNCDTNIAYSKCLR</sequence>
<accession>P01079</accession>
<dbReference type="PIR" id="A01318">
    <property type="entry name" value="XKPOT"/>
</dbReference>
<dbReference type="SMR" id="P01079"/>
<dbReference type="InParanoid" id="P01079"/>
<dbReference type="Proteomes" id="UP000011115">
    <property type="component" value="Unassembled WGS sequence"/>
</dbReference>
<dbReference type="ExpressionAtlas" id="P01079">
    <property type="expression patterns" value="baseline and differential"/>
</dbReference>
<dbReference type="GO" id="GO:0005576">
    <property type="term" value="C:extracellular region"/>
    <property type="evidence" value="ECO:0007669"/>
    <property type="project" value="UniProtKB-SubCell"/>
</dbReference>
<dbReference type="GO" id="GO:0004867">
    <property type="term" value="F:serine-type endopeptidase inhibitor activity"/>
    <property type="evidence" value="ECO:0007669"/>
    <property type="project" value="UniProtKB-KW"/>
</dbReference>
<dbReference type="Gene3D" id="3.30.60.30">
    <property type="match status" value="1"/>
</dbReference>
<dbReference type="InterPro" id="IPR003465">
    <property type="entry name" value="Prot_inh_I20"/>
</dbReference>
<dbReference type="InterPro" id="IPR051391">
    <property type="entry name" value="Protease_inhibitor_I20"/>
</dbReference>
<dbReference type="PANTHER" id="PTHR33832:SF17">
    <property type="entry name" value="PROTEINASE INHIBITOR TYPE-2"/>
    <property type="match status" value="1"/>
</dbReference>
<dbReference type="PANTHER" id="PTHR33832">
    <property type="entry name" value="SERINE-TYPE ENDOPEPTIDASE INHIBITOR"/>
    <property type="match status" value="1"/>
</dbReference>
<dbReference type="Pfam" id="PF02428">
    <property type="entry name" value="Prot_inhib_II"/>
    <property type="match status" value="1"/>
</dbReference>
<dbReference type="SUPFAM" id="SSF100897">
    <property type="entry name" value="Plant proteinase inhibitors"/>
    <property type="match status" value="1"/>
</dbReference>
<name>IP21_SOLTU</name>
<evidence type="ECO:0000250" key="1"/>
<evidence type="ECO:0000305" key="2"/>
<protein>
    <recommendedName>
        <fullName>Proteinase inhibitor PTI</fullName>
    </recommendedName>
</protein>
<organism>
    <name type="scientific">Solanum tuberosum</name>
    <name type="common">Potato</name>
    <dbReference type="NCBI Taxonomy" id="4113"/>
    <lineage>
        <taxon>Eukaryota</taxon>
        <taxon>Viridiplantae</taxon>
        <taxon>Streptophyta</taxon>
        <taxon>Embryophyta</taxon>
        <taxon>Tracheophyta</taxon>
        <taxon>Spermatophyta</taxon>
        <taxon>Magnoliopsida</taxon>
        <taxon>eudicotyledons</taxon>
        <taxon>Gunneridae</taxon>
        <taxon>Pentapetalae</taxon>
        <taxon>asterids</taxon>
        <taxon>lamiids</taxon>
        <taxon>Solanales</taxon>
        <taxon>Solanaceae</taxon>
        <taxon>Solanoideae</taxon>
        <taxon>Solaneae</taxon>
        <taxon>Solanum</taxon>
    </lineage>
</organism>
<keyword id="KW-0903">Direct protein sequencing</keyword>
<keyword id="KW-1015">Disulfide bond</keyword>
<keyword id="KW-0646">Protease inhibitor</keyword>
<keyword id="KW-1185">Reference proteome</keyword>
<keyword id="KW-0964">Secreted</keyword>
<keyword id="KW-0722">Serine protease inhibitor</keyword>
<reference key="1">
    <citation type="journal article" date="1982" name="Biochemistry">
        <title>Primary structures of two low molecular weight proteinase inhibitors from potatoes.</title>
        <authorList>
            <person name="Hass G.M."/>
            <person name="Hermodson M.A."/>
            <person name="Ryan C.A."/>
            <person name="Gentry L."/>
        </authorList>
    </citation>
    <scope>PROTEIN SEQUENCE</scope>
</reference>
<comment type="subcellular location">
    <subcellularLocation>
        <location>Secreted</location>
    </subcellularLocation>
</comment>
<comment type="similarity">
    <text evidence="2">Belongs to the protease inhibitor I20 (potato type II proteinase inhibitor) family.</text>
</comment>